<sequence length="313" mass="34376">MNELPGSYKLKIKKAATGSIQFSRYLLTRMTHDRVNVNAGYLAYITLLSIVPMLTVLLSILSSFSVFADVGLVIQNFVITNFVPASGDAVHGALLEFVANTGKMTAVGSVFLFIAALMLISNIDKNLNYIWRVTEKRRAVLSFSMYWMVLTLGPILIGASIAATSYVTSLNLLQNEVVSSAFNTVIRKLPLITSFFAFFGLYLLVPNKKIHFSHAAAGSLVAALLFELSKKGFAAYITQFPSYQLIYGALAAIPILFVWVYLCWLIVLVGAEVTAALGEQEQWSDSQEMVHSSDKDKITEQGNNSDSTDPESK</sequence>
<protein>
    <recommendedName>
        <fullName evidence="1">UPF0761 membrane protein VS_0126</fullName>
    </recommendedName>
</protein>
<proteinExistence type="inferred from homology"/>
<organism>
    <name type="scientific">Vibrio atlanticus (strain LGP32)</name>
    <name type="common">Vibrio splendidus (strain Mel32)</name>
    <dbReference type="NCBI Taxonomy" id="575788"/>
    <lineage>
        <taxon>Bacteria</taxon>
        <taxon>Pseudomonadati</taxon>
        <taxon>Pseudomonadota</taxon>
        <taxon>Gammaproteobacteria</taxon>
        <taxon>Vibrionales</taxon>
        <taxon>Vibrionaceae</taxon>
        <taxon>Vibrio</taxon>
    </lineage>
</organism>
<dbReference type="EMBL" id="FM954972">
    <property type="protein sequence ID" value="CAV17159.1"/>
    <property type="molecule type" value="Genomic_DNA"/>
</dbReference>
<dbReference type="STRING" id="575788.VS_0126"/>
<dbReference type="KEGG" id="vsp:VS_0126"/>
<dbReference type="eggNOG" id="COG1295">
    <property type="taxonomic scope" value="Bacteria"/>
</dbReference>
<dbReference type="HOGENOM" id="CLU_032288_0_0_6"/>
<dbReference type="Proteomes" id="UP000009100">
    <property type="component" value="Chromosome 1"/>
</dbReference>
<dbReference type="GO" id="GO:0005886">
    <property type="term" value="C:plasma membrane"/>
    <property type="evidence" value="ECO:0007669"/>
    <property type="project" value="UniProtKB-SubCell"/>
</dbReference>
<dbReference type="HAMAP" id="MF_00672">
    <property type="entry name" value="UPF0761"/>
    <property type="match status" value="1"/>
</dbReference>
<dbReference type="InterPro" id="IPR023679">
    <property type="entry name" value="UPF0761_bac"/>
</dbReference>
<dbReference type="InterPro" id="IPR017039">
    <property type="entry name" value="Virul_fac_BrkB"/>
</dbReference>
<dbReference type="NCBIfam" id="NF002457">
    <property type="entry name" value="PRK01637.1"/>
    <property type="match status" value="1"/>
</dbReference>
<dbReference type="NCBIfam" id="TIGR00765">
    <property type="entry name" value="yihY_not_rbn"/>
    <property type="match status" value="1"/>
</dbReference>
<dbReference type="PANTHER" id="PTHR30213">
    <property type="entry name" value="INNER MEMBRANE PROTEIN YHJD"/>
    <property type="match status" value="1"/>
</dbReference>
<dbReference type="PANTHER" id="PTHR30213:SF0">
    <property type="entry name" value="UPF0761 MEMBRANE PROTEIN YIHY"/>
    <property type="match status" value="1"/>
</dbReference>
<dbReference type="Pfam" id="PF03631">
    <property type="entry name" value="Virul_fac_BrkB"/>
    <property type="match status" value="1"/>
</dbReference>
<dbReference type="PIRSF" id="PIRSF035875">
    <property type="entry name" value="RNase_BN"/>
    <property type="match status" value="1"/>
</dbReference>
<evidence type="ECO:0000255" key="1">
    <source>
        <dbReference type="HAMAP-Rule" id="MF_00672"/>
    </source>
</evidence>
<evidence type="ECO:0000256" key="2">
    <source>
        <dbReference type="SAM" id="MobiDB-lite"/>
    </source>
</evidence>
<keyword id="KW-0997">Cell inner membrane</keyword>
<keyword id="KW-1003">Cell membrane</keyword>
<keyword id="KW-0472">Membrane</keyword>
<keyword id="KW-0812">Transmembrane</keyword>
<keyword id="KW-1133">Transmembrane helix</keyword>
<accession>B7VHE7</accession>
<feature type="chain" id="PRO_1000147672" description="UPF0761 membrane protein VS_0126">
    <location>
        <begin position="1"/>
        <end position="313"/>
    </location>
</feature>
<feature type="transmembrane region" description="Helical" evidence="1">
    <location>
        <begin position="41"/>
        <end position="61"/>
    </location>
</feature>
<feature type="transmembrane region" description="Helical" evidence="1">
    <location>
        <begin position="104"/>
        <end position="124"/>
    </location>
</feature>
<feature type="transmembrane region" description="Helical" evidence="1">
    <location>
        <begin position="139"/>
        <end position="159"/>
    </location>
</feature>
<feature type="transmembrane region" description="Helical" evidence="1">
    <location>
        <begin position="185"/>
        <end position="205"/>
    </location>
</feature>
<feature type="transmembrane region" description="Helical" evidence="1">
    <location>
        <begin position="217"/>
        <end position="237"/>
    </location>
</feature>
<feature type="transmembrane region" description="Helical" evidence="1">
    <location>
        <begin position="249"/>
        <end position="269"/>
    </location>
</feature>
<feature type="region of interest" description="Disordered" evidence="2">
    <location>
        <begin position="281"/>
        <end position="313"/>
    </location>
</feature>
<feature type="compositionally biased region" description="Polar residues" evidence="2">
    <location>
        <begin position="281"/>
        <end position="290"/>
    </location>
</feature>
<comment type="subcellular location">
    <subcellularLocation>
        <location evidence="1">Cell inner membrane</location>
        <topology evidence="1">Multi-pass membrane protein</topology>
    </subcellularLocation>
</comment>
<comment type="similarity">
    <text evidence="1">Belongs to the UPF0761 family.</text>
</comment>
<gene>
    <name type="ordered locus">VS_0126</name>
</gene>
<name>Y126_VIBA3</name>
<reference key="1">
    <citation type="submission" date="2009-02" db="EMBL/GenBank/DDBJ databases">
        <title>Vibrio splendidus str. LGP32 complete genome.</title>
        <authorList>
            <person name="Mazel D."/>
            <person name="Le Roux F."/>
        </authorList>
    </citation>
    <scope>NUCLEOTIDE SEQUENCE [LARGE SCALE GENOMIC DNA]</scope>
    <source>
        <strain>LGP32</strain>
    </source>
</reference>